<name>RS6B_SCHPO</name>
<gene>
    <name type="primary">rps602</name>
    <name type="synonym">rps6b</name>
    <name type="ORF">SPAPB1E7.12</name>
</gene>
<proteinExistence type="evidence at protein level"/>
<comment type="function">
    <text evidence="1">Component of the ribosome, a large ribonucleoprotein complex responsible for the synthesis of proteins in the cell. The small ribosomal subunit (SSU) binds messenger RNAs (mRNAs) and translates the encoded message by selecting cognate aminoacyl-transfer RNA (tRNA) molecules. The large subunit (LSU) contains the ribosomal catalytic site termed the peptidyl transferase center (PTC), which catalyzes the formation of peptide bonds, thereby polymerizing the amino acids delivered by tRNAs into a polypeptide chain. The nascent polypeptides leave the ribosome through a tunnel in the LSU and interact with protein factors that function in enzymatic processing, targeting, and the membrane insertion of nascent chains at the exit of the ribosomal tunnel. eS6 is involved in nucleolar processing of pre-18S ribosomal RNA and ribosome assembly.</text>
</comment>
<comment type="subunit">
    <text evidence="1">Component of the small ribosomal subunit (SSU). Mature yeast ribosomes consist of a small (40S) and a large (60S) subunit. The 40S small subunit contains 1 molecule of ribosomal RNA (18S rRNA) and at least 33 different proteins. The large 60S subunit contains 3 rRNA molecules (25S, 5.8S and 5S rRNA) and at least 46 different proteins. Interacts with snoRNA U3. uS11 interacts with MPP10. Component of the ribosomal small subunit (SSU) processome composed of at least 40 protein subunits and snoRNA U3.</text>
</comment>
<comment type="subcellular location">
    <subcellularLocation>
        <location evidence="3">Cytoplasm</location>
    </subcellularLocation>
</comment>
<comment type="miscellaneous">
    <text>There are 2 genes for eS6 in S.pombe.</text>
</comment>
<comment type="similarity">
    <text evidence="5">Belongs to the eukaryotic ribosomal protein eS6 family.</text>
</comment>
<keyword id="KW-0002">3D-structure</keyword>
<keyword id="KW-0963">Cytoplasm</keyword>
<keyword id="KW-0597">Phosphoprotein</keyword>
<keyword id="KW-1185">Reference proteome</keyword>
<keyword id="KW-0687">Ribonucleoprotein</keyword>
<keyword id="KW-0689">Ribosomal protein</keyword>
<organism>
    <name type="scientific">Schizosaccharomyces pombe (strain 972 / ATCC 24843)</name>
    <name type="common">Fission yeast</name>
    <dbReference type="NCBI Taxonomy" id="284812"/>
    <lineage>
        <taxon>Eukaryota</taxon>
        <taxon>Fungi</taxon>
        <taxon>Dikarya</taxon>
        <taxon>Ascomycota</taxon>
        <taxon>Taphrinomycotina</taxon>
        <taxon>Schizosaccharomycetes</taxon>
        <taxon>Schizosaccharomycetales</taxon>
        <taxon>Schizosaccharomycetaceae</taxon>
        <taxon>Schizosaccharomyces</taxon>
    </lineage>
</organism>
<dbReference type="EMBL" id="CU329670">
    <property type="protein sequence ID" value="CAC36929.1"/>
    <property type="molecule type" value="Genomic_DNA"/>
</dbReference>
<dbReference type="RefSeq" id="NP_594138.1">
    <property type="nucleotide sequence ID" value="NM_001019562.2"/>
</dbReference>
<dbReference type="PDB" id="9AXT">
    <property type="method" value="EM"/>
    <property type="resolution" value="2.40 A"/>
    <property type="chains" value="AJ=1-239"/>
</dbReference>
<dbReference type="PDB" id="9AXV">
    <property type="method" value="EM"/>
    <property type="resolution" value="2.40 A"/>
    <property type="chains" value="AJ=1-239"/>
</dbReference>
<dbReference type="PDBsum" id="9AXT"/>
<dbReference type="PDBsum" id="9AXV"/>
<dbReference type="EMDB" id="EMD-43972"/>
<dbReference type="EMDB" id="EMD-43976"/>
<dbReference type="SMR" id="Q9C0Z7"/>
<dbReference type="BioGRID" id="279996">
    <property type="interactions" value="11"/>
</dbReference>
<dbReference type="FunCoup" id="Q9C0Z7">
    <property type="interactions" value="715"/>
</dbReference>
<dbReference type="IntAct" id="Q9C0Z7">
    <property type="interactions" value="1"/>
</dbReference>
<dbReference type="STRING" id="284812.Q9C0Z7"/>
<dbReference type="iPTMnet" id="Q9C0Z7"/>
<dbReference type="PaxDb" id="4896-SPAPB1E7.12.1"/>
<dbReference type="EnsemblFungi" id="SPAPB1E7.12.1">
    <property type="protein sequence ID" value="SPAPB1E7.12.1:pep"/>
    <property type="gene ID" value="SPAPB1E7.12"/>
</dbReference>
<dbReference type="GeneID" id="2543581"/>
<dbReference type="KEGG" id="spo:2543581"/>
<dbReference type="PomBase" id="SPAPB1E7.12">
    <property type="gene designation" value="rps602"/>
</dbReference>
<dbReference type="VEuPathDB" id="FungiDB:SPAPB1E7.12"/>
<dbReference type="eggNOG" id="KOG1646">
    <property type="taxonomic scope" value="Eukaryota"/>
</dbReference>
<dbReference type="HOGENOM" id="CLU_046346_0_1_1"/>
<dbReference type="InParanoid" id="Q9C0Z7"/>
<dbReference type="OMA" id="KPRYKAP"/>
<dbReference type="PhylomeDB" id="Q9C0Z7"/>
<dbReference type="Reactome" id="R-SPO-156827">
    <property type="pathway name" value="L13a-mediated translational silencing of Ceruloplasmin expression"/>
</dbReference>
<dbReference type="Reactome" id="R-SPO-166208">
    <property type="pathway name" value="mTORC1-mediated signalling"/>
</dbReference>
<dbReference type="Reactome" id="R-SPO-1799339">
    <property type="pathway name" value="SRP-dependent cotranslational protein targeting to membrane"/>
</dbReference>
<dbReference type="Reactome" id="R-SPO-6791226">
    <property type="pathway name" value="Major pathway of rRNA processing in the nucleolus and cytosol"/>
</dbReference>
<dbReference type="Reactome" id="R-SPO-72649">
    <property type="pathway name" value="Translation initiation complex formation"/>
</dbReference>
<dbReference type="Reactome" id="R-SPO-72689">
    <property type="pathway name" value="Formation of a pool of free 40S subunits"/>
</dbReference>
<dbReference type="Reactome" id="R-SPO-72695">
    <property type="pathway name" value="Formation of the ternary complex, and subsequently, the 43S complex"/>
</dbReference>
<dbReference type="Reactome" id="R-SPO-72702">
    <property type="pathway name" value="Ribosomal scanning and start codon recognition"/>
</dbReference>
<dbReference type="Reactome" id="R-SPO-72706">
    <property type="pathway name" value="GTP hydrolysis and joining of the 60S ribosomal subunit"/>
</dbReference>
<dbReference type="Reactome" id="R-SPO-975956">
    <property type="pathway name" value="Nonsense Mediated Decay (NMD) independent of the Exon Junction Complex (EJC)"/>
</dbReference>
<dbReference type="Reactome" id="R-SPO-975957">
    <property type="pathway name" value="Nonsense Mediated Decay (NMD) enhanced by the Exon Junction Complex (EJC)"/>
</dbReference>
<dbReference type="PRO" id="PR:Q9C0Z7"/>
<dbReference type="Proteomes" id="UP000002485">
    <property type="component" value="Chromosome I"/>
</dbReference>
<dbReference type="GO" id="GO:0005829">
    <property type="term" value="C:cytosol"/>
    <property type="evidence" value="ECO:0007005"/>
    <property type="project" value="PomBase"/>
</dbReference>
<dbReference type="GO" id="GO:0022627">
    <property type="term" value="C:cytosolic small ribosomal subunit"/>
    <property type="evidence" value="ECO:0000269"/>
    <property type="project" value="PomBase"/>
</dbReference>
<dbReference type="GO" id="GO:0003735">
    <property type="term" value="F:structural constituent of ribosome"/>
    <property type="evidence" value="ECO:0000266"/>
    <property type="project" value="PomBase"/>
</dbReference>
<dbReference type="GO" id="GO:0002181">
    <property type="term" value="P:cytoplasmic translation"/>
    <property type="evidence" value="ECO:0000266"/>
    <property type="project" value="PomBase"/>
</dbReference>
<dbReference type="GO" id="GO:0042254">
    <property type="term" value="P:ribosome biogenesis"/>
    <property type="evidence" value="ECO:0000266"/>
    <property type="project" value="PomBase"/>
</dbReference>
<dbReference type="FunFam" id="1.20.5.2650:FF:000001">
    <property type="entry name" value="40S ribosomal protein S6"/>
    <property type="match status" value="1"/>
</dbReference>
<dbReference type="Gene3D" id="1.20.5.2650">
    <property type="match status" value="1"/>
</dbReference>
<dbReference type="InterPro" id="IPR001377">
    <property type="entry name" value="Ribosomal_eS6"/>
</dbReference>
<dbReference type="InterPro" id="IPR014401">
    <property type="entry name" value="Ribosomal_eS6-like"/>
</dbReference>
<dbReference type="InterPro" id="IPR018282">
    <property type="entry name" value="Ribosomal_eS6_CS"/>
</dbReference>
<dbReference type="PANTHER" id="PTHR11502">
    <property type="entry name" value="40S RIBOSOMAL PROTEIN S6"/>
    <property type="match status" value="1"/>
</dbReference>
<dbReference type="Pfam" id="PF01092">
    <property type="entry name" value="Ribosomal_S6e"/>
    <property type="match status" value="1"/>
</dbReference>
<dbReference type="PIRSF" id="PIRSF002129">
    <property type="entry name" value="Ribosom_S6_euk"/>
    <property type="match status" value="1"/>
</dbReference>
<dbReference type="SMART" id="SM01405">
    <property type="entry name" value="Ribosomal_S6e"/>
    <property type="match status" value="1"/>
</dbReference>
<dbReference type="PROSITE" id="PS00578">
    <property type="entry name" value="RIBOSOMAL_S6E"/>
    <property type="match status" value="1"/>
</dbReference>
<sequence>MKLNISYPANGTQKLIEIDDDRRLRVFMEKRMGQEVPGDSVGPEFAGYVFKITGGNDKQGFPMFQGVLLPHRVRLLLRAGHPCYRPRRDGERKRKSVRGCIVGQDLAVLALAIVKQGEQDIPGLTDVTVPKRLGPKRASKIRRFFNLSKEDDVRQFVIRREVVPKKEGKKPYTKAPKIQRLVTPRTLQHKRHRFALKRRQAEKNREEAAEFAQLMAKRVAEAKQKKEVVKARRASSMKK</sequence>
<accession>Q9C0Z7</accession>
<reference key="1">
    <citation type="journal article" date="2002" name="Nature">
        <title>The genome sequence of Schizosaccharomyces pombe.</title>
        <authorList>
            <person name="Wood V."/>
            <person name="Gwilliam R."/>
            <person name="Rajandream M.A."/>
            <person name="Lyne M.H."/>
            <person name="Lyne R."/>
            <person name="Stewart A."/>
            <person name="Sgouros J.G."/>
            <person name="Peat N."/>
            <person name="Hayles J."/>
            <person name="Baker S.G."/>
            <person name="Basham D."/>
            <person name="Bowman S."/>
            <person name="Brooks K."/>
            <person name="Brown D."/>
            <person name="Brown S."/>
            <person name="Chillingworth T."/>
            <person name="Churcher C.M."/>
            <person name="Collins M."/>
            <person name="Connor R."/>
            <person name="Cronin A."/>
            <person name="Davis P."/>
            <person name="Feltwell T."/>
            <person name="Fraser A."/>
            <person name="Gentles S."/>
            <person name="Goble A."/>
            <person name="Hamlin N."/>
            <person name="Harris D.E."/>
            <person name="Hidalgo J."/>
            <person name="Hodgson G."/>
            <person name="Holroyd S."/>
            <person name="Hornsby T."/>
            <person name="Howarth S."/>
            <person name="Huckle E.J."/>
            <person name="Hunt S."/>
            <person name="Jagels K."/>
            <person name="James K.D."/>
            <person name="Jones L."/>
            <person name="Jones M."/>
            <person name="Leather S."/>
            <person name="McDonald S."/>
            <person name="McLean J."/>
            <person name="Mooney P."/>
            <person name="Moule S."/>
            <person name="Mungall K.L."/>
            <person name="Murphy L.D."/>
            <person name="Niblett D."/>
            <person name="Odell C."/>
            <person name="Oliver K."/>
            <person name="O'Neil S."/>
            <person name="Pearson D."/>
            <person name="Quail M.A."/>
            <person name="Rabbinowitsch E."/>
            <person name="Rutherford K.M."/>
            <person name="Rutter S."/>
            <person name="Saunders D."/>
            <person name="Seeger K."/>
            <person name="Sharp S."/>
            <person name="Skelton J."/>
            <person name="Simmonds M.N."/>
            <person name="Squares R."/>
            <person name="Squares S."/>
            <person name="Stevens K."/>
            <person name="Taylor K."/>
            <person name="Taylor R.G."/>
            <person name="Tivey A."/>
            <person name="Walsh S.V."/>
            <person name="Warren T."/>
            <person name="Whitehead S."/>
            <person name="Woodward J.R."/>
            <person name="Volckaert G."/>
            <person name="Aert R."/>
            <person name="Robben J."/>
            <person name="Grymonprez B."/>
            <person name="Weltjens I."/>
            <person name="Vanstreels E."/>
            <person name="Rieger M."/>
            <person name="Schaefer M."/>
            <person name="Mueller-Auer S."/>
            <person name="Gabel C."/>
            <person name="Fuchs M."/>
            <person name="Duesterhoeft A."/>
            <person name="Fritzc C."/>
            <person name="Holzer E."/>
            <person name="Moestl D."/>
            <person name="Hilbert H."/>
            <person name="Borzym K."/>
            <person name="Langer I."/>
            <person name="Beck A."/>
            <person name="Lehrach H."/>
            <person name="Reinhardt R."/>
            <person name="Pohl T.M."/>
            <person name="Eger P."/>
            <person name="Zimmermann W."/>
            <person name="Wedler H."/>
            <person name="Wambutt R."/>
            <person name="Purnelle B."/>
            <person name="Goffeau A."/>
            <person name="Cadieu E."/>
            <person name="Dreano S."/>
            <person name="Gloux S."/>
            <person name="Lelaure V."/>
            <person name="Mottier S."/>
            <person name="Galibert F."/>
            <person name="Aves S.J."/>
            <person name="Xiang Z."/>
            <person name="Hunt C."/>
            <person name="Moore K."/>
            <person name="Hurst S.M."/>
            <person name="Lucas M."/>
            <person name="Rochet M."/>
            <person name="Gaillardin C."/>
            <person name="Tallada V.A."/>
            <person name="Garzon A."/>
            <person name="Thode G."/>
            <person name="Daga R.R."/>
            <person name="Cruzado L."/>
            <person name="Jimenez J."/>
            <person name="Sanchez M."/>
            <person name="del Rey F."/>
            <person name="Benito J."/>
            <person name="Dominguez A."/>
            <person name="Revuelta J.L."/>
            <person name="Moreno S."/>
            <person name="Armstrong J."/>
            <person name="Forsburg S.L."/>
            <person name="Cerutti L."/>
            <person name="Lowe T."/>
            <person name="McCombie W.R."/>
            <person name="Paulsen I."/>
            <person name="Potashkin J."/>
            <person name="Shpakovski G.V."/>
            <person name="Ussery D."/>
            <person name="Barrell B.G."/>
            <person name="Nurse P."/>
        </authorList>
    </citation>
    <scope>NUCLEOTIDE SEQUENCE [LARGE SCALE GENOMIC DNA]</scope>
    <source>
        <strain>972 / ATCC 24843</strain>
    </source>
</reference>
<reference key="2">
    <citation type="journal article" date="2006" name="Nat. Biotechnol.">
        <title>ORFeome cloning and global analysis of protein localization in the fission yeast Schizosaccharomyces pombe.</title>
        <authorList>
            <person name="Matsuyama A."/>
            <person name="Arai R."/>
            <person name="Yashiroda Y."/>
            <person name="Shirai A."/>
            <person name="Kamata A."/>
            <person name="Sekido S."/>
            <person name="Kobayashi Y."/>
            <person name="Hashimoto A."/>
            <person name="Hamamoto M."/>
            <person name="Hiraoka Y."/>
            <person name="Horinouchi S."/>
            <person name="Yoshida M."/>
        </authorList>
    </citation>
    <scope>SUBCELLULAR LOCATION [LARGE SCALE ANALYSIS]</scope>
</reference>
<reference key="3">
    <citation type="journal article" date="2008" name="J. Proteome Res.">
        <title>Phosphoproteome analysis of fission yeast.</title>
        <authorList>
            <person name="Wilson-Grady J.T."/>
            <person name="Villen J."/>
            <person name="Gygi S.P."/>
        </authorList>
    </citation>
    <scope>PHOSPHORYLATION [LARGE SCALE ANALYSIS] AT SER-148</scope>
    <scope>IDENTIFICATION BY MASS SPECTROMETRY</scope>
</reference>
<evidence type="ECO:0000250" key="1">
    <source>
        <dbReference type="UniProtKB" id="P0CX38"/>
    </source>
</evidence>
<evidence type="ECO:0000255" key="2"/>
<evidence type="ECO:0000269" key="3">
    <source>
    </source>
</evidence>
<evidence type="ECO:0000269" key="4">
    <source>
    </source>
</evidence>
<evidence type="ECO:0000305" key="5"/>
<feature type="chain" id="PRO_0000137340" description="Small ribosomal subunit protein eS6B">
    <location>
        <begin position="1"/>
        <end position="239"/>
    </location>
</feature>
<feature type="modified residue" description="Phosphoserine" evidence="4">
    <location>
        <position position="148"/>
    </location>
</feature>
<feature type="modified residue" description="Phosphoserine" evidence="2">
    <location>
        <position position="235"/>
    </location>
</feature>
<feature type="modified residue" description="Phosphoserine" evidence="2">
    <location>
        <position position="236"/>
    </location>
</feature>
<protein>
    <recommendedName>
        <fullName evidence="5">Small ribosomal subunit protein eS6B</fullName>
    </recommendedName>
    <alternativeName>
        <fullName>40S ribosomal protein S6-B</fullName>
    </alternativeName>
</protein>